<dbReference type="EC" id="2.3.1.43" evidence="7 9 11"/>
<dbReference type="EC" id="3.1.1.47" evidence="4"/>
<dbReference type="EMBL" id="J05154">
    <property type="protein sequence ID" value="AAA39419.1"/>
    <property type="molecule type" value="mRNA"/>
</dbReference>
<dbReference type="EMBL" id="AK149476">
    <property type="protein sequence ID" value="BAE28903.1"/>
    <property type="molecule type" value="mRNA"/>
</dbReference>
<dbReference type="EMBL" id="AC159265">
    <property type="status" value="NOT_ANNOTATED_CDS"/>
    <property type="molecule type" value="Genomic_DNA"/>
</dbReference>
<dbReference type="EMBL" id="BC028861">
    <property type="protein sequence ID" value="AAH28861.1"/>
    <property type="molecule type" value="mRNA"/>
</dbReference>
<dbReference type="EMBL" id="X54095">
    <property type="protein sequence ID" value="CAA38029.1"/>
    <property type="molecule type" value="Genomic_DNA"/>
</dbReference>
<dbReference type="CCDS" id="CCDS22622.1"/>
<dbReference type="PIR" id="A34158">
    <property type="entry name" value="XXMSN"/>
</dbReference>
<dbReference type="RefSeq" id="NP_032516.2">
    <property type="nucleotide sequence ID" value="NM_008490.2"/>
</dbReference>
<dbReference type="SMR" id="P16301"/>
<dbReference type="FunCoup" id="P16301">
    <property type="interactions" value="118"/>
</dbReference>
<dbReference type="STRING" id="10090.ENSMUSP00000038232"/>
<dbReference type="SwissLipids" id="SLP:000001729"/>
<dbReference type="ESTHER" id="mouse-lcat">
    <property type="family name" value="PC-sterol_acyltransferase"/>
</dbReference>
<dbReference type="GlyConnect" id="2582">
    <property type="glycosylation" value="5 N-Linked glycans (2 sites)"/>
</dbReference>
<dbReference type="GlyCosmos" id="P16301">
    <property type="glycosylation" value="5 sites, 4 glycans"/>
</dbReference>
<dbReference type="GlyGen" id="P16301">
    <property type="glycosylation" value="5 sites, 7 N-linked glycans (4 sites)"/>
</dbReference>
<dbReference type="iPTMnet" id="P16301"/>
<dbReference type="PhosphoSitePlus" id="P16301"/>
<dbReference type="CPTAC" id="non-CPTAC-5612"/>
<dbReference type="PaxDb" id="10090-ENSMUSP00000038232"/>
<dbReference type="PeptideAtlas" id="P16301"/>
<dbReference type="ProteomicsDB" id="263703"/>
<dbReference type="Pumba" id="P16301"/>
<dbReference type="Antibodypedia" id="15960">
    <property type="antibodies" value="423 antibodies from 34 providers"/>
</dbReference>
<dbReference type="Ensembl" id="ENSMUST00000038896.8">
    <property type="protein sequence ID" value="ENSMUSP00000038232.8"/>
    <property type="gene ID" value="ENSMUSG00000035237.8"/>
</dbReference>
<dbReference type="GeneID" id="16816"/>
<dbReference type="KEGG" id="mmu:16816"/>
<dbReference type="UCSC" id="uc009neq.2">
    <property type="organism name" value="mouse"/>
</dbReference>
<dbReference type="AGR" id="MGI:96755"/>
<dbReference type="CTD" id="3931"/>
<dbReference type="MGI" id="MGI:96755">
    <property type="gene designation" value="Lcat"/>
</dbReference>
<dbReference type="VEuPathDB" id="HostDB:ENSMUSG00000035237"/>
<dbReference type="eggNOG" id="KOG2369">
    <property type="taxonomic scope" value="Eukaryota"/>
</dbReference>
<dbReference type="GeneTree" id="ENSGT00940000160052"/>
<dbReference type="HOGENOM" id="CLU_037070_1_0_1"/>
<dbReference type="InParanoid" id="P16301"/>
<dbReference type="OMA" id="VVNWLCY"/>
<dbReference type="OrthoDB" id="190846at2759"/>
<dbReference type="PhylomeDB" id="P16301"/>
<dbReference type="TreeFam" id="TF313258"/>
<dbReference type="Reactome" id="R-MMU-8964058">
    <property type="pathway name" value="HDL remodeling"/>
</dbReference>
<dbReference type="BioGRID-ORCS" id="16816">
    <property type="hits" value="3 hits in 78 CRISPR screens"/>
</dbReference>
<dbReference type="ChiTaRS" id="Lcat">
    <property type="organism name" value="mouse"/>
</dbReference>
<dbReference type="PRO" id="PR:P16301"/>
<dbReference type="Proteomes" id="UP000000589">
    <property type="component" value="Chromosome 8"/>
</dbReference>
<dbReference type="RNAct" id="P16301">
    <property type="molecule type" value="protein"/>
</dbReference>
<dbReference type="Bgee" id="ENSMUSG00000035237">
    <property type="expression patterns" value="Expressed in left lobe of liver and 139 other cell types or tissues"/>
</dbReference>
<dbReference type="GO" id="GO:0005615">
    <property type="term" value="C:extracellular space"/>
    <property type="evidence" value="ECO:0000314"/>
    <property type="project" value="MGI"/>
</dbReference>
<dbReference type="GO" id="GO:0034364">
    <property type="term" value="C:high-density lipoprotein particle"/>
    <property type="evidence" value="ECO:0007669"/>
    <property type="project" value="Ensembl"/>
</dbReference>
<dbReference type="GO" id="GO:0003847">
    <property type="term" value="F:1-alkyl-2-acetylglycerophosphocholine esterase activity"/>
    <property type="evidence" value="ECO:0000250"/>
    <property type="project" value="UniProtKB"/>
</dbReference>
<dbReference type="GO" id="GO:0034186">
    <property type="term" value="F:apolipoprotein A-I binding"/>
    <property type="evidence" value="ECO:0007669"/>
    <property type="project" value="Ensembl"/>
</dbReference>
<dbReference type="GO" id="GO:0004607">
    <property type="term" value="F:phosphatidylcholine-sterol O-acyltransferase activity"/>
    <property type="evidence" value="ECO:0000314"/>
    <property type="project" value="MGI"/>
</dbReference>
<dbReference type="GO" id="GO:0004623">
    <property type="term" value="F:phospholipase A2 activity"/>
    <property type="evidence" value="ECO:0007669"/>
    <property type="project" value="Ensembl"/>
</dbReference>
<dbReference type="GO" id="GO:0047179">
    <property type="term" value="F:platelet-activating factor acetyltransferase activity"/>
    <property type="evidence" value="ECO:0000314"/>
    <property type="project" value="UniProtKB"/>
</dbReference>
<dbReference type="GO" id="GO:0004771">
    <property type="term" value="F:sterol ester esterase activity"/>
    <property type="evidence" value="ECO:0007669"/>
    <property type="project" value="Ensembl"/>
</dbReference>
<dbReference type="GO" id="GO:0046222">
    <property type="term" value="P:aflatoxin metabolic process"/>
    <property type="evidence" value="ECO:0007669"/>
    <property type="project" value="Ensembl"/>
</dbReference>
<dbReference type="GO" id="GO:0042632">
    <property type="term" value="P:cholesterol homeostasis"/>
    <property type="evidence" value="ECO:0007669"/>
    <property type="project" value="Ensembl"/>
</dbReference>
<dbReference type="GO" id="GO:0008203">
    <property type="term" value="P:cholesterol metabolic process"/>
    <property type="evidence" value="ECO:0000314"/>
    <property type="project" value="MGI"/>
</dbReference>
<dbReference type="GO" id="GO:0030301">
    <property type="term" value="P:cholesterol transport"/>
    <property type="evidence" value="ECO:0000266"/>
    <property type="project" value="MGI"/>
</dbReference>
<dbReference type="GO" id="GO:0034375">
    <property type="term" value="P:high-density lipoprotein particle remodeling"/>
    <property type="evidence" value="ECO:0007669"/>
    <property type="project" value="Ensembl"/>
</dbReference>
<dbReference type="GO" id="GO:0042158">
    <property type="term" value="P:lipoprotein biosynthetic process"/>
    <property type="evidence" value="ECO:0000314"/>
    <property type="project" value="MGI"/>
</dbReference>
<dbReference type="GO" id="GO:0006656">
    <property type="term" value="P:phosphatidylcholine biosynthetic process"/>
    <property type="evidence" value="ECO:0007669"/>
    <property type="project" value="Ensembl"/>
</dbReference>
<dbReference type="GO" id="GO:0046470">
    <property type="term" value="P:phosphatidylcholine metabolic process"/>
    <property type="evidence" value="ECO:0000250"/>
    <property type="project" value="UniProtKB"/>
</dbReference>
<dbReference type="GO" id="GO:0090107">
    <property type="term" value="P:regulation of high-density lipoprotein particle assembly"/>
    <property type="evidence" value="ECO:0000314"/>
    <property type="project" value="UniProtKB"/>
</dbReference>
<dbReference type="GO" id="GO:0046688">
    <property type="term" value="P:response to copper ion"/>
    <property type="evidence" value="ECO:0007669"/>
    <property type="project" value="Ensembl"/>
</dbReference>
<dbReference type="GO" id="GO:0051384">
    <property type="term" value="P:response to glucocorticoid"/>
    <property type="evidence" value="ECO:0007669"/>
    <property type="project" value="Ensembl"/>
</dbReference>
<dbReference type="GO" id="GO:0043691">
    <property type="term" value="P:reverse cholesterol transport"/>
    <property type="evidence" value="ECO:0007669"/>
    <property type="project" value="Ensembl"/>
</dbReference>
<dbReference type="GO" id="GO:0034372">
    <property type="term" value="P:very-low-density lipoprotein particle remodeling"/>
    <property type="evidence" value="ECO:0007669"/>
    <property type="project" value="Ensembl"/>
</dbReference>
<dbReference type="FunFam" id="3.40.50.1820:FF:000090">
    <property type="entry name" value="Phosphatidylcholine-sterol acyltransferase"/>
    <property type="match status" value="1"/>
</dbReference>
<dbReference type="FunFam" id="3.40.50.1820:FF:000183">
    <property type="entry name" value="Phosphatidylcholine-sterol acyltransferase"/>
    <property type="match status" value="2"/>
</dbReference>
<dbReference type="Gene3D" id="3.40.50.1820">
    <property type="entry name" value="alpha/beta hydrolase"/>
    <property type="match status" value="3"/>
</dbReference>
<dbReference type="InterPro" id="IPR029058">
    <property type="entry name" value="AB_hydrolase_fold"/>
</dbReference>
<dbReference type="InterPro" id="IPR003386">
    <property type="entry name" value="LACT/PDAT_acylTrfase"/>
</dbReference>
<dbReference type="PANTHER" id="PTHR11440">
    <property type="entry name" value="LECITHIN-CHOLESTEROL ACYLTRANSFERASE-RELATED"/>
    <property type="match status" value="1"/>
</dbReference>
<dbReference type="Pfam" id="PF02450">
    <property type="entry name" value="LCAT"/>
    <property type="match status" value="1"/>
</dbReference>
<dbReference type="SUPFAM" id="SSF53474">
    <property type="entry name" value="alpha/beta-Hydrolases"/>
    <property type="match status" value="1"/>
</dbReference>
<dbReference type="PROSITE" id="PS00120">
    <property type="entry name" value="LIPASE_SER"/>
    <property type="match status" value="1"/>
</dbReference>
<accession>P16301</accession>
<accession>Q8K139</accession>
<organism>
    <name type="scientific">Mus musculus</name>
    <name type="common">Mouse</name>
    <dbReference type="NCBI Taxonomy" id="10090"/>
    <lineage>
        <taxon>Eukaryota</taxon>
        <taxon>Metazoa</taxon>
        <taxon>Chordata</taxon>
        <taxon>Craniata</taxon>
        <taxon>Vertebrata</taxon>
        <taxon>Euteleostomi</taxon>
        <taxon>Mammalia</taxon>
        <taxon>Eutheria</taxon>
        <taxon>Euarchontoglires</taxon>
        <taxon>Glires</taxon>
        <taxon>Rodentia</taxon>
        <taxon>Myomorpha</taxon>
        <taxon>Muroidea</taxon>
        <taxon>Muridae</taxon>
        <taxon>Murinae</taxon>
        <taxon>Mus</taxon>
        <taxon>Mus</taxon>
    </lineage>
</organism>
<gene>
    <name type="primary">Lcat</name>
</gene>
<sequence>MGLPGSPWQRVLLLLGLLLPPATPFWLLNVLFPPHTTPKAELSNHTRPVILVPGCLGNRLEAKLDKPDVVNWMCYRKTEDFFTIWLDFNLFLPLGVDCWIDNTRIVYNHSSGRVSNAPGVQIRVPGFGKTESVEYVDDNKLAGYLHTLVQNLVNNGYVRDETVRAAPYDWRLAPHQQDEYYKKLAGLVEEMYAAYGKPVFLIGHSLGCLHVLHFLLRQPQSWKDHFIDGFISLGAPWGGSIKAMRILASGDNQGIPILSNIKLKEEQRITTTSPWMLPAPHVWPEDHVFISTPNFNYTVQDFERFFTDLHFEEGWHMFLQSRDLLERLPAPGVEVYCLYGVGRPTPHTYIYDHNFPYKDPVAALYEDGDDTVATRSTELCGQWQGRQSQPVHLLPMNETDHLNMVFSNKTLEHINAILLGAYRTPKSPAASPSPPPPE</sequence>
<proteinExistence type="evidence at protein level"/>
<reference key="1">
    <citation type="journal article" date="1989" name="J. Biol. Chem.">
        <title>Tissue-specific expression, developmental regulation, and chromosomal mapping of the lecithin: cholesterol acyltransferase gene. Evidence for expression in brain and testes as well as liver.</title>
        <authorList>
            <person name="Warden C.H."/>
            <person name="Langner C.A."/>
            <person name="Gordon J.I."/>
            <person name="Taylor B.A."/>
            <person name="McLean J.W."/>
            <person name="Lusis A.J."/>
        </authorList>
    </citation>
    <scope>NUCLEOTIDE SEQUENCE [MRNA]</scope>
    <scope>TISSUE SPECIFICITY</scope>
    <scope>DEVELOPMENTAL STAGE</scope>
</reference>
<reference key="2">
    <citation type="journal article" date="2005" name="Science">
        <title>The transcriptional landscape of the mammalian genome.</title>
        <authorList>
            <person name="Carninci P."/>
            <person name="Kasukawa T."/>
            <person name="Katayama S."/>
            <person name="Gough J."/>
            <person name="Frith M.C."/>
            <person name="Maeda N."/>
            <person name="Oyama R."/>
            <person name="Ravasi T."/>
            <person name="Lenhard B."/>
            <person name="Wells C."/>
            <person name="Kodzius R."/>
            <person name="Shimokawa K."/>
            <person name="Bajic V.B."/>
            <person name="Brenner S.E."/>
            <person name="Batalov S."/>
            <person name="Forrest A.R."/>
            <person name="Zavolan M."/>
            <person name="Davis M.J."/>
            <person name="Wilming L.G."/>
            <person name="Aidinis V."/>
            <person name="Allen J.E."/>
            <person name="Ambesi-Impiombato A."/>
            <person name="Apweiler R."/>
            <person name="Aturaliya R.N."/>
            <person name="Bailey T.L."/>
            <person name="Bansal M."/>
            <person name="Baxter L."/>
            <person name="Beisel K.W."/>
            <person name="Bersano T."/>
            <person name="Bono H."/>
            <person name="Chalk A.M."/>
            <person name="Chiu K.P."/>
            <person name="Choudhary V."/>
            <person name="Christoffels A."/>
            <person name="Clutterbuck D.R."/>
            <person name="Crowe M.L."/>
            <person name="Dalla E."/>
            <person name="Dalrymple B.P."/>
            <person name="de Bono B."/>
            <person name="Della Gatta G."/>
            <person name="di Bernardo D."/>
            <person name="Down T."/>
            <person name="Engstrom P."/>
            <person name="Fagiolini M."/>
            <person name="Faulkner G."/>
            <person name="Fletcher C.F."/>
            <person name="Fukushima T."/>
            <person name="Furuno M."/>
            <person name="Futaki S."/>
            <person name="Gariboldi M."/>
            <person name="Georgii-Hemming P."/>
            <person name="Gingeras T.R."/>
            <person name="Gojobori T."/>
            <person name="Green R.E."/>
            <person name="Gustincich S."/>
            <person name="Harbers M."/>
            <person name="Hayashi Y."/>
            <person name="Hensch T.K."/>
            <person name="Hirokawa N."/>
            <person name="Hill D."/>
            <person name="Huminiecki L."/>
            <person name="Iacono M."/>
            <person name="Ikeo K."/>
            <person name="Iwama A."/>
            <person name="Ishikawa T."/>
            <person name="Jakt M."/>
            <person name="Kanapin A."/>
            <person name="Katoh M."/>
            <person name="Kawasawa Y."/>
            <person name="Kelso J."/>
            <person name="Kitamura H."/>
            <person name="Kitano H."/>
            <person name="Kollias G."/>
            <person name="Krishnan S.P."/>
            <person name="Kruger A."/>
            <person name="Kummerfeld S.K."/>
            <person name="Kurochkin I.V."/>
            <person name="Lareau L.F."/>
            <person name="Lazarevic D."/>
            <person name="Lipovich L."/>
            <person name="Liu J."/>
            <person name="Liuni S."/>
            <person name="McWilliam S."/>
            <person name="Madan Babu M."/>
            <person name="Madera M."/>
            <person name="Marchionni L."/>
            <person name="Matsuda H."/>
            <person name="Matsuzawa S."/>
            <person name="Miki H."/>
            <person name="Mignone F."/>
            <person name="Miyake S."/>
            <person name="Morris K."/>
            <person name="Mottagui-Tabar S."/>
            <person name="Mulder N."/>
            <person name="Nakano N."/>
            <person name="Nakauchi H."/>
            <person name="Ng P."/>
            <person name="Nilsson R."/>
            <person name="Nishiguchi S."/>
            <person name="Nishikawa S."/>
            <person name="Nori F."/>
            <person name="Ohara O."/>
            <person name="Okazaki Y."/>
            <person name="Orlando V."/>
            <person name="Pang K.C."/>
            <person name="Pavan W.J."/>
            <person name="Pavesi G."/>
            <person name="Pesole G."/>
            <person name="Petrovsky N."/>
            <person name="Piazza S."/>
            <person name="Reed J."/>
            <person name="Reid J.F."/>
            <person name="Ring B.Z."/>
            <person name="Ringwald M."/>
            <person name="Rost B."/>
            <person name="Ruan Y."/>
            <person name="Salzberg S.L."/>
            <person name="Sandelin A."/>
            <person name="Schneider C."/>
            <person name="Schoenbach C."/>
            <person name="Sekiguchi K."/>
            <person name="Semple C.A."/>
            <person name="Seno S."/>
            <person name="Sessa L."/>
            <person name="Sheng Y."/>
            <person name="Shibata Y."/>
            <person name="Shimada H."/>
            <person name="Shimada K."/>
            <person name="Silva D."/>
            <person name="Sinclair B."/>
            <person name="Sperling S."/>
            <person name="Stupka E."/>
            <person name="Sugiura K."/>
            <person name="Sultana R."/>
            <person name="Takenaka Y."/>
            <person name="Taki K."/>
            <person name="Tammoja K."/>
            <person name="Tan S.L."/>
            <person name="Tang S."/>
            <person name="Taylor M.S."/>
            <person name="Tegner J."/>
            <person name="Teichmann S.A."/>
            <person name="Ueda H.R."/>
            <person name="van Nimwegen E."/>
            <person name="Verardo R."/>
            <person name="Wei C.L."/>
            <person name="Yagi K."/>
            <person name="Yamanishi H."/>
            <person name="Zabarovsky E."/>
            <person name="Zhu S."/>
            <person name="Zimmer A."/>
            <person name="Hide W."/>
            <person name="Bult C."/>
            <person name="Grimmond S.M."/>
            <person name="Teasdale R.D."/>
            <person name="Liu E.T."/>
            <person name="Brusic V."/>
            <person name="Quackenbush J."/>
            <person name="Wahlestedt C."/>
            <person name="Mattick J.S."/>
            <person name="Hume D.A."/>
            <person name="Kai C."/>
            <person name="Sasaki D."/>
            <person name="Tomaru Y."/>
            <person name="Fukuda S."/>
            <person name="Kanamori-Katayama M."/>
            <person name="Suzuki M."/>
            <person name="Aoki J."/>
            <person name="Arakawa T."/>
            <person name="Iida J."/>
            <person name="Imamura K."/>
            <person name="Itoh M."/>
            <person name="Kato T."/>
            <person name="Kawaji H."/>
            <person name="Kawagashira N."/>
            <person name="Kawashima T."/>
            <person name="Kojima M."/>
            <person name="Kondo S."/>
            <person name="Konno H."/>
            <person name="Nakano K."/>
            <person name="Ninomiya N."/>
            <person name="Nishio T."/>
            <person name="Okada M."/>
            <person name="Plessy C."/>
            <person name="Shibata K."/>
            <person name="Shiraki T."/>
            <person name="Suzuki S."/>
            <person name="Tagami M."/>
            <person name="Waki K."/>
            <person name="Watahiki A."/>
            <person name="Okamura-Oho Y."/>
            <person name="Suzuki H."/>
            <person name="Kawai J."/>
            <person name="Hayashizaki Y."/>
        </authorList>
    </citation>
    <scope>NUCLEOTIDE SEQUENCE [LARGE SCALE MRNA]</scope>
    <source>
        <strain>C57BL/6J</strain>
        <tissue>Liver</tissue>
    </source>
</reference>
<reference key="3">
    <citation type="journal article" date="2009" name="PLoS Biol.">
        <title>Lineage-specific biology revealed by a finished genome assembly of the mouse.</title>
        <authorList>
            <person name="Church D.M."/>
            <person name="Goodstadt L."/>
            <person name="Hillier L.W."/>
            <person name="Zody M.C."/>
            <person name="Goldstein S."/>
            <person name="She X."/>
            <person name="Bult C.J."/>
            <person name="Agarwala R."/>
            <person name="Cherry J.L."/>
            <person name="DiCuccio M."/>
            <person name="Hlavina W."/>
            <person name="Kapustin Y."/>
            <person name="Meric P."/>
            <person name="Maglott D."/>
            <person name="Birtle Z."/>
            <person name="Marques A.C."/>
            <person name="Graves T."/>
            <person name="Zhou S."/>
            <person name="Teague B."/>
            <person name="Potamousis K."/>
            <person name="Churas C."/>
            <person name="Place M."/>
            <person name="Herschleb J."/>
            <person name="Runnheim R."/>
            <person name="Forrest D."/>
            <person name="Amos-Landgraf J."/>
            <person name="Schwartz D.C."/>
            <person name="Cheng Z."/>
            <person name="Lindblad-Toh K."/>
            <person name="Eichler E.E."/>
            <person name="Ponting C.P."/>
        </authorList>
    </citation>
    <scope>NUCLEOTIDE SEQUENCE [LARGE SCALE GENOMIC DNA]</scope>
    <source>
        <strain>C57BL/6J</strain>
    </source>
</reference>
<reference key="4">
    <citation type="journal article" date="2004" name="Genome Res.">
        <title>The status, quality, and expansion of the NIH full-length cDNA project: the Mammalian Gene Collection (MGC).</title>
        <authorList>
            <consortium name="The MGC Project Team"/>
        </authorList>
    </citation>
    <scope>NUCLEOTIDE SEQUENCE [LARGE SCALE MRNA]</scope>
    <source>
        <strain>FVB/N</strain>
        <tissue>Liver</tissue>
    </source>
</reference>
<reference key="5">
    <citation type="submission" date="1992-05" db="EMBL/GenBank/DDBJ databases">
        <title>Promoter and 5' flanking sequences of the mouse LCAT gene.</title>
        <authorList>
            <person name="Meroni G."/>
            <person name="Malgaretti N."/>
            <person name="Magnaghi P."/>
            <person name="Taramelli R."/>
        </authorList>
    </citation>
    <scope>NUCLEOTIDE SEQUENCE [GENOMIC DNA] OF 1-14</scope>
</reference>
<reference key="6">
    <citation type="journal article" date="1996" name="J. Lipid Res.">
        <title>Comparative studies on the substrate specificity of lecithin:cholesterol acyltransferase towards the molecular species of phosphatidylcholine in the plasma of 14 vertebrates.</title>
        <authorList>
            <person name="Subbaiah P.V."/>
            <person name="Liu M."/>
        </authorList>
    </citation>
    <scope>CATALYTIC ACTIVITY</scope>
    <scope>FUNCTION</scope>
    <scope>SUBSTRATE SPECIFICITY</scope>
    <scope>SUBCELLULAR LOCATION</scope>
    <scope>TISSUE SPECIFICITY</scope>
</reference>
<reference key="7">
    <citation type="journal article" date="1999" name="J. Lipid Res.">
        <title>Targeted disruption of the murine lecithin:cholesterol acyltransferase gene is associated with reductions in plasma paraoxonase and platelet-activating factor acetylhydrolase activities but not in apolipoprotein J concentration.</title>
        <authorList>
            <person name="Forte T.M."/>
            <person name="Oda M.N."/>
            <person name="Knoff L."/>
            <person name="Frei B."/>
            <person name="Suh J."/>
            <person name="Harmony J.A."/>
            <person name="Stuart W.D."/>
            <person name="Rubin E.M."/>
            <person name="Ng D.S."/>
        </authorList>
    </citation>
    <scope>FUNCTION</scope>
    <scope>CATALYTIC ACTIVITY</scope>
    <scope>DISRUPTION PHENOTYPE</scope>
</reference>
<reference key="8">
    <citation type="journal article" date="2002" name="J. Biol. Chem.">
        <title>Oxidative stress is markedly elevated in lecithin:cholesterol acyltransferase-deficient mice and is paradoxically reversed in the apolipoprotein E knockout background in association with a reduction in atherosclerosis.</title>
        <authorList>
            <person name="Ng D.S."/>
            <person name="Maguire G.F."/>
            <person name="Wylie J."/>
            <person name="Ravandi A."/>
            <person name="Xuan W."/>
            <person name="Ahmed Z."/>
            <person name="Eskandarian M."/>
            <person name="Kuksis A."/>
            <person name="Connelly P.W."/>
        </authorList>
    </citation>
    <scope>DISRUPTION PHENOTYPE</scope>
    <scope>FUNCTION</scope>
</reference>
<reference key="9">
    <citation type="journal article" date="2002" name="J. Lipid Res.">
        <title>In vivo contribution of LCAT to apolipoprotein B lipoprotein cholesteryl esters in LDL receptor and apolipoprotein E knockout mice.</title>
        <authorList>
            <person name="Furbee J.W. Jr."/>
            <person name="Francone O."/>
            <person name="Parks J.S."/>
        </authorList>
    </citation>
    <scope>DISRUPTION PHENOTYPE</scope>
    <scope>FUNCTION</scope>
</reference>
<reference key="10">
    <citation type="journal article" date="2005" name="Biochemistry">
        <title>Apolipoprotein E is the major physiological activator of lecithin-cholesterol acyltransferase (LCAT) on apolipoprotein B lipoproteins.</title>
        <authorList>
            <person name="Zhao Y."/>
            <person name="Thorngate F.E."/>
            <person name="Weisgraber K.H."/>
            <person name="Williams D.L."/>
            <person name="Parks J.S."/>
        </authorList>
    </citation>
    <scope>FUNCTION</scope>
    <scope>ACTIVITY REGULATION</scope>
</reference>
<reference key="11">
    <citation type="journal article" date="2006" name="J. Proteome Res.">
        <title>Proteome-wide characterization of N-glycosylation events by diagonal chromatography.</title>
        <authorList>
            <person name="Ghesquiere B."/>
            <person name="Van Damme J."/>
            <person name="Martens L."/>
            <person name="Vandekerckhove J."/>
            <person name="Gevaert K."/>
        </authorList>
    </citation>
    <scope>GLYCOSYLATION [LARGE SCALE ANALYSIS] AT ASN-397 AND ASN-408</scope>
    <source>
        <strain>C57BL/6J</strain>
        <tissue>Plasma</tissue>
    </source>
</reference>
<reference key="12">
    <citation type="journal article" date="2009" name="J. Lipid Res.">
        <title>LCAT synthesized by primary astrocytes esterifies cholesterol on glia-derived lipoproteins.</title>
        <authorList>
            <person name="Hirsch-Reinshagen V."/>
            <person name="Donkin J."/>
            <person name="Stukas S."/>
            <person name="Chan J."/>
            <person name="Wilkinson A."/>
            <person name="Fan J."/>
            <person name="Parks J.S."/>
            <person name="Kuivenhoven J.A."/>
            <person name="Lutjohann D."/>
            <person name="Pritchard H."/>
            <person name="Wellington C.L."/>
        </authorList>
    </citation>
    <scope>DISRUPTION PHENOTYPE</scope>
    <scope>TISSUE SPECIFICITY</scope>
    <scope>ACTIVITY REGULATION</scope>
    <scope>FUNCTION</scope>
    <scope>CATALYTIC ACTIVITY</scope>
    <scope>SUBCELLULAR LOCATION</scope>
</reference>
<reference key="13">
    <citation type="journal article" date="2010" name="Cell">
        <title>A tissue-specific atlas of mouse protein phosphorylation and expression.</title>
        <authorList>
            <person name="Huttlin E.L."/>
            <person name="Jedrychowski M.P."/>
            <person name="Elias J.E."/>
            <person name="Goswami T."/>
            <person name="Rad R."/>
            <person name="Beausoleil S.A."/>
            <person name="Villen J."/>
            <person name="Haas W."/>
            <person name="Sowa M.E."/>
            <person name="Gygi S.P."/>
        </authorList>
    </citation>
    <scope>IDENTIFICATION BY MASS SPECTROMETRY [LARGE SCALE ANALYSIS]</scope>
    <source>
        <tissue>Brown adipose tissue</tissue>
        <tissue>Liver</tissue>
        <tissue>Lung</tissue>
    </source>
</reference>
<name>LCAT_MOUSE</name>
<protein>
    <recommendedName>
        <fullName>Phosphatidylcholine-sterol acyltransferase</fullName>
        <ecNumber evidence="7 9 11">2.3.1.43</ecNumber>
    </recommendedName>
    <alternativeName>
        <fullName>1-alkyl-2-acetylglycerophosphocholine esterase</fullName>
        <ecNumber evidence="4">3.1.1.47</ecNumber>
    </alternativeName>
    <alternativeName>
        <fullName>Lecithin-cholesterol acyltransferase</fullName>
    </alternativeName>
    <alternativeName>
        <fullName>Phospholipid-cholesterol acyltransferase</fullName>
    </alternativeName>
    <alternativeName>
        <fullName evidence="12">Platelet-activating factor acetylhydrolase</fullName>
        <shortName>PAF acetylhydrolase</shortName>
    </alternativeName>
</protein>
<feature type="signal peptide" evidence="1">
    <location>
        <begin position="1"/>
        <end position="24"/>
    </location>
</feature>
<feature type="chain" id="PRO_0000017804" description="Phosphatidylcholine-sterol acyltransferase">
    <location>
        <begin position="25"/>
        <end position="438"/>
    </location>
</feature>
<feature type="active site" description="Nucleophile" evidence="1">
    <location>
        <position position="205"/>
    </location>
</feature>
<feature type="active site" description="Charge relay system" evidence="1">
    <location>
        <position position="369"/>
    </location>
</feature>
<feature type="active site" description="Charge relay system" evidence="1">
    <location>
        <position position="401"/>
    </location>
</feature>
<feature type="site" description="Determinant for substrate specificity" evidence="1">
    <location>
        <position position="173"/>
    </location>
</feature>
<feature type="glycosylation site" description="N-linked (GlcNAc...) asparagine" evidence="2">
    <location>
        <position position="44"/>
    </location>
</feature>
<feature type="glycosylation site" description="N-linked (GlcNAc...) asparagine" evidence="2">
    <location>
        <position position="108"/>
    </location>
</feature>
<feature type="glycosylation site" description="N-linked (GlcNAc...) asparagine" evidence="2">
    <location>
        <position position="296"/>
    </location>
</feature>
<feature type="glycosylation site" description="N-linked (GlcNAc...) asparagine" evidence="8">
    <location>
        <position position="397"/>
    </location>
</feature>
<feature type="glycosylation site" description="N-linked (GlcNAc...) asparagine" evidence="8">
    <location>
        <position position="408"/>
    </location>
</feature>
<feature type="disulfide bond" evidence="1">
    <location>
        <begin position="74"/>
        <end position="98"/>
    </location>
</feature>
<feature type="disulfide bond" evidence="1">
    <location>
        <begin position="337"/>
        <end position="380"/>
    </location>
</feature>
<feature type="sequence conflict" description="In Ref. 1; AAA39419." evidence="13" ref="1">
    <original>L</original>
    <variation>M</variation>
    <location>
        <position position="411"/>
    </location>
</feature>
<keyword id="KW-0012">Acyltransferase</keyword>
<keyword id="KW-0153">Cholesterol metabolism</keyword>
<keyword id="KW-1015">Disulfide bond</keyword>
<keyword id="KW-0325">Glycoprotein</keyword>
<keyword id="KW-0378">Hydrolase</keyword>
<keyword id="KW-0443">Lipid metabolism</keyword>
<keyword id="KW-1185">Reference proteome</keyword>
<keyword id="KW-0964">Secreted</keyword>
<keyword id="KW-0732">Signal</keyword>
<keyword id="KW-0753">Steroid metabolism</keyword>
<keyword id="KW-1207">Sterol metabolism</keyword>
<keyword id="KW-0808">Transferase</keyword>
<evidence type="ECO:0000250" key="1">
    <source>
        <dbReference type="UniProtKB" id="P04180"/>
    </source>
</evidence>
<evidence type="ECO:0000255" key="2"/>
<evidence type="ECO:0000255" key="3">
    <source>
        <dbReference type="PROSITE-ProRule" id="PRU10037"/>
    </source>
</evidence>
<evidence type="ECO:0000269" key="4">
    <source>
    </source>
</evidence>
<evidence type="ECO:0000269" key="5">
    <source>
    </source>
</evidence>
<evidence type="ECO:0000269" key="6">
    <source>
    </source>
</evidence>
<evidence type="ECO:0000269" key="7">
    <source>
    </source>
</evidence>
<evidence type="ECO:0000269" key="8">
    <source>
    </source>
</evidence>
<evidence type="ECO:0000269" key="9">
    <source>
    </source>
</evidence>
<evidence type="ECO:0000269" key="10">
    <source>
    </source>
</evidence>
<evidence type="ECO:0000269" key="11">
    <source>
    </source>
</evidence>
<evidence type="ECO:0000303" key="12">
    <source>
    </source>
</evidence>
<evidence type="ECO:0000305" key="13"/>
<evidence type="ECO:0000305" key="14">
    <source>
    </source>
</evidence>
<comment type="function">
    <text evidence="1 5 6 7 9 11">Central enzyme in the extracellular metabolism of plasma lipoproteins. Synthesized mainly in the liver and secreted into plasma where it converts cholesterol and phosphatidylcholines (lecithins) to cholesteryl esters and lysophosphatidylcholines on the surface of high and low density lipoproteins (HDLs and LDLs) (PubMed:19065001). The cholesterol ester is then transported back to the liver. Also produced in the brain by primary astrocytes, and esterifies free cholesterol on nascent APOE-containing lipoproteins secreted from glia and influences cerebral spinal fluid (CSF) APOE- and APOA1 levels (PubMed:19065001). Together with APOE and the cholesterol transporter ABCA1, plays a key role in the maturation of glial-derived, nascent lipoproteins (PubMed:19065001). Required for remodeling high-density lipoprotein particles into their spherical forms (PubMed:19065001). Has a preference for plasma 16:0-18:2 or 18:O-18:2 phosphatidylcholines (PubMed:8820107). Catalyzes the hydrolysis of 1-O-alkyl-2-acetyl-sn-glycero-3-phosphocholine (platelet-activating factor or PAF) to 1-O-alkyl-sn-glycero-3-phosphocholine (lyso-PAF) (PubMed:10393212). Also catalyzes the transfer of the acetate group from PAF to 1-hexadecanoyl-sn-glycero-3-phosphocholine forming lyso-PAF (By similarity). Catalyzes the esterification of (24S)-hydroxycholesterol (24(S)OH-C), also known as cerebrosterol to produce 24(S)OH-C monoesters (By similarity).</text>
</comment>
<comment type="catalytic activity">
    <reaction evidence="3 7 9 11">
        <text>a sterol + a 1,2-diacyl-sn-glycero-3-phosphocholine = a sterol ester + a 1-acyl-sn-glycero-3-phosphocholine</text>
        <dbReference type="Rhea" id="RHEA:21204"/>
        <dbReference type="ChEBI" id="CHEBI:15889"/>
        <dbReference type="ChEBI" id="CHEBI:35915"/>
        <dbReference type="ChEBI" id="CHEBI:57643"/>
        <dbReference type="ChEBI" id="CHEBI:58168"/>
        <dbReference type="EC" id="2.3.1.43"/>
    </reaction>
</comment>
<comment type="catalytic activity">
    <reaction evidence="4">
        <text>a 1-O-alkyl-2-acetyl-sn-glycero-3-phosphocholine + H2O = a 1-O-alkyl-sn-glycero-3-phosphocholine + acetate + H(+)</text>
        <dbReference type="Rhea" id="RHEA:17777"/>
        <dbReference type="ChEBI" id="CHEBI:15377"/>
        <dbReference type="ChEBI" id="CHEBI:15378"/>
        <dbReference type="ChEBI" id="CHEBI:30089"/>
        <dbReference type="ChEBI" id="CHEBI:30909"/>
        <dbReference type="ChEBI" id="CHEBI:36707"/>
        <dbReference type="EC" id="3.1.1.47"/>
    </reaction>
    <physiologicalReaction direction="left-to-right" evidence="14">
        <dbReference type="Rhea" id="RHEA:17778"/>
    </physiologicalReaction>
</comment>
<comment type="catalytic activity">
    <reaction evidence="1">
        <text>a 1-hexadecanoyl-2-acyl-sn-glycero-3-phosphocholine + (24S)-hydroxycholesterol = (24S)-24-hydroxycholesterol ester + 1-hexadecanoyl-sn-glycero-3-phosphocholine</text>
        <dbReference type="Rhea" id="RHEA:43216"/>
        <dbReference type="ChEBI" id="CHEBI:34310"/>
        <dbReference type="ChEBI" id="CHEBI:72998"/>
        <dbReference type="ChEBI" id="CHEBI:77369"/>
        <dbReference type="ChEBI" id="CHEBI:82869"/>
    </reaction>
    <physiologicalReaction direction="left-to-right" evidence="1">
        <dbReference type="Rhea" id="RHEA:43217"/>
    </physiologicalReaction>
</comment>
<comment type="catalytic activity">
    <reaction evidence="1">
        <text>(24S)-hydroxycholesterol + 1-hexadecanoyl-2-(9Z,12Z-octadecadienoyl)-sn-glycero-3-phosphocholine = (24S)-hydroxycholesterol 3-linoleoate + 1-hexadecanoyl-sn-glycero-3-phosphocholine</text>
        <dbReference type="Rhea" id="RHEA:43224"/>
        <dbReference type="ChEBI" id="CHEBI:34310"/>
        <dbReference type="ChEBI" id="CHEBI:72998"/>
        <dbReference type="ChEBI" id="CHEBI:73002"/>
        <dbReference type="ChEBI" id="CHEBI:82875"/>
    </reaction>
    <physiologicalReaction direction="left-to-right" evidence="1">
        <dbReference type="Rhea" id="RHEA:43225"/>
    </physiologicalReaction>
</comment>
<comment type="catalytic activity">
    <reaction evidence="1">
        <text>1-hexadecanoyl-2-(5Z,8Z,11Z,14Z-eicosatetraenoyl)-sn-glycero-3-phosphocholine + cholesterol = cholesteryl (5Z,8Z,11Z,14Z)-eicosatetraenoate + 1-hexadecanoyl-sn-glycero-3-phosphocholine</text>
        <dbReference type="Rhea" id="RHEA:53448"/>
        <dbReference type="ChEBI" id="CHEBI:16113"/>
        <dbReference type="ChEBI" id="CHEBI:72998"/>
        <dbReference type="ChEBI" id="CHEBI:73003"/>
        <dbReference type="ChEBI" id="CHEBI:82751"/>
    </reaction>
    <physiologicalReaction direction="left-to-right" evidence="1">
        <dbReference type="Rhea" id="RHEA:53449"/>
    </physiologicalReaction>
</comment>
<comment type="catalytic activity">
    <reaction evidence="1">
        <text>1-hexadecanoyl-2-(9Z-octadecenoyl)-sn-glycero-3-phosphocholine + cholesterol = cholesteryl (9Z-octadecenoate) + 1-hexadecanoyl-sn-glycero-3-phosphocholine</text>
        <dbReference type="Rhea" id="RHEA:53456"/>
        <dbReference type="ChEBI" id="CHEBI:16113"/>
        <dbReference type="ChEBI" id="CHEBI:46898"/>
        <dbReference type="ChEBI" id="CHEBI:72998"/>
        <dbReference type="ChEBI" id="CHEBI:73001"/>
    </reaction>
    <physiologicalReaction direction="left-to-right" evidence="1">
        <dbReference type="Rhea" id="RHEA:53457"/>
    </physiologicalReaction>
</comment>
<comment type="catalytic activity">
    <reaction evidence="1">
        <text>1-hexadecanoyl-2-(8Z,11Z,14Z-eicosatrienoyl)-sn-glycero-3-phosphocholine + cholesterol = cholesteryl (8Z,11Z,14Z)-eicosatrienoate + 1-hexadecanoyl-sn-glycero-3-phosphocholine</text>
        <dbReference type="Rhea" id="RHEA:53464"/>
        <dbReference type="ChEBI" id="CHEBI:16113"/>
        <dbReference type="ChEBI" id="CHEBI:72998"/>
        <dbReference type="ChEBI" id="CHEBI:84346"/>
        <dbReference type="ChEBI" id="CHEBI:86121"/>
    </reaction>
    <physiologicalReaction direction="left-to-right" evidence="1">
        <dbReference type="Rhea" id="RHEA:53465"/>
    </physiologicalReaction>
</comment>
<comment type="catalytic activity">
    <reaction evidence="1">
        <text>1-hexadecanoyl-2-(5Z,8Z,11Z-eicosatrienoyl)-sn-glycero-3-phosphocholine + cholesterol = cholesteryl (5Z,8Z,11Z)-eicosatrienoate + 1-hexadecanoyl-sn-glycero-3-phosphocholine</text>
        <dbReference type="Rhea" id="RHEA:53460"/>
        <dbReference type="ChEBI" id="CHEBI:16113"/>
        <dbReference type="ChEBI" id="CHEBI:72998"/>
        <dbReference type="ChEBI" id="CHEBI:86119"/>
        <dbReference type="ChEBI" id="CHEBI:88752"/>
    </reaction>
    <physiologicalReaction direction="left-to-right" evidence="1">
        <dbReference type="Rhea" id="RHEA:53461"/>
    </physiologicalReaction>
</comment>
<comment type="catalytic activity">
    <reaction evidence="1">
        <text>1-hexadecanoyl-2-(5Z,8Z,11Z,14Z,17Z-eicosapentaenoyl)-sn-glycero-3-phosphocholine + cholesterol = (5Z,8Z,11Z,14Z,17Z-eicosapentaenoyl)-cholesterol + 1-hexadecanoyl-sn-glycero-3-phosphocholine</text>
        <dbReference type="Rhea" id="RHEA:53468"/>
        <dbReference type="ChEBI" id="CHEBI:16113"/>
        <dbReference type="ChEBI" id="CHEBI:72998"/>
        <dbReference type="ChEBI" id="CHEBI:84969"/>
        <dbReference type="ChEBI" id="CHEBI:86137"/>
    </reaction>
    <physiologicalReaction direction="left-to-right" evidence="1">
        <dbReference type="Rhea" id="RHEA:53469"/>
    </physiologicalReaction>
</comment>
<comment type="catalytic activity">
    <reaction evidence="1">
        <text>1-hexadecanoyl-2-(9Z,12Z-octadecadienoyl)-sn-glycero-3-phosphocholine + cholesterol = cholesteryl (9Z,12Z)-octadecadienoate + 1-hexadecanoyl-sn-glycero-3-phosphocholine</text>
        <dbReference type="Rhea" id="RHEA:53472"/>
        <dbReference type="ChEBI" id="CHEBI:16113"/>
        <dbReference type="ChEBI" id="CHEBI:41509"/>
        <dbReference type="ChEBI" id="CHEBI:72998"/>
        <dbReference type="ChEBI" id="CHEBI:73002"/>
    </reaction>
    <physiologicalReaction direction="left-to-right" evidence="1">
        <dbReference type="Rhea" id="RHEA:53473"/>
    </physiologicalReaction>
</comment>
<comment type="catalytic activity">
    <reaction evidence="1">
        <text>1-hexadecanoyl-2-(6Z,9Z,12Z-octadecatrienoyl)-sn-glycero-3-phosphocholine + cholesterol = (6Z,9Z,12Z-octadecatrienoyl)-cholesterol + 1-hexadecanoyl-sn-glycero-3-phosphocholine</text>
        <dbReference type="Rhea" id="RHEA:53476"/>
        <dbReference type="ChEBI" id="CHEBI:16113"/>
        <dbReference type="ChEBI" id="CHEBI:72998"/>
        <dbReference type="ChEBI" id="CHEBI:84786"/>
        <dbReference type="ChEBI" id="CHEBI:88756"/>
    </reaction>
    <physiologicalReaction direction="left-to-right" evidence="1">
        <dbReference type="Rhea" id="RHEA:53477"/>
    </physiologicalReaction>
</comment>
<comment type="catalytic activity">
    <reaction evidence="1">
        <text>1-hexadecanoyl-2-(11Z,14Z,17Z-eicosatrienoyl)-sn-glycero-3-phosphocholine + cholesterol = (11Z,14Z,17Z-eicosatrienoyl)-cholesterol + 1-hexadecanoyl-sn-glycero-3-phosphocholine</text>
        <dbReference type="Rhea" id="RHEA:53516"/>
        <dbReference type="ChEBI" id="CHEBI:16113"/>
        <dbReference type="ChEBI" id="CHEBI:72998"/>
        <dbReference type="ChEBI" id="CHEBI:137411"/>
        <dbReference type="ChEBI" id="CHEBI:137412"/>
    </reaction>
    <physiologicalReaction direction="left-to-right" evidence="1">
        <dbReference type="Rhea" id="RHEA:53517"/>
    </physiologicalReaction>
</comment>
<comment type="catalytic activity">
    <reaction evidence="1">
        <text>1-hexadecanoyl-2-(9Z,12Z,15Z-octadecatrienoyl)-sn-glycero-3-phosphocholine + cholesterol = (9Z,12Z,15Z-octadecatrienoyl)-cholesterol + 1-hexadecanoyl-sn-glycero-3-phosphocholine</text>
        <dbReference type="Rhea" id="RHEA:53520"/>
        <dbReference type="ChEBI" id="CHEBI:16113"/>
        <dbReference type="ChEBI" id="CHEBI:72998"/>
        <dbReference type="ChEBI" id="CHEBI:84341"/>
        <dbReference type="ChEBI" id="CHEBI:84789"/>
    </reaction>
    <physiologicalReaction direction="left-to-right" evidence="1">
        <dbReference type="Rhea" id="RHEA:53521"/>
    </physiologicalReaction>
</comment>
<comment type="catalytic activity">
    <reaction evidence="1">
        <text>1-hexadecanoyl-2-(9Z,12Z-octadecadienoyl)-sn-glycero-3-phosphocholine + H2O = (9Z,12Z)-octadecadienoate + 1-hexadecanoyl-sn-glycero-3-phosphocholine + H(+)</text>
        <dbReference type="Rhea" id="RHEA:40811"/>
        <dbReference type="ChEBI" id="CHEBI:15377"/>
        <dbReference type="ChEBI" id="CHEBI:15378"/>
        <dbReference type="ChEBI" id="CHEBI:30245"/>
        <dbReference type="ChEBI" id="CHEBI:72998"/>
        <dbReference type="ChEBI" id="CHEBI:73002"/>
    </reaction>
    <physiologicalReaction direction="left-to-right" evidence="1">
        <dbReference type="Rhea" id="RHEA:40812"/>
    </physiologicalReaction>
</comment>
<comment type="catalytic activity">
    <reaction evidence="1">
        <text>1-hexadecanoyl-2-(5Z,8Z,11Z,14Z-eicosatetraenoyl)-sn-glycero-3-phosphocholine + H2O = 1-hexadecanoyl-sn-glycero-3-phosphocholine + (5Z,8Z,11Z,14Z)-eicosatetraenoate + H(+)</text>
        <dbReference type="Rhea" id="RHEA:40427"/>
        <dbReference type="ChEBI" id="CHEBI:15377"/>
        <dbReference type="ChEBI" id="CHEBI:15378"/>
        <dbReference type="ChEBI" id="CHEBI:32395"/>
        <dbReference type="ChEBI" id="CHEBI:72998"/>
        <dbReference type="ChEBI" id="CHEBI:73003"/>
    </reaction>
    <physiologicalReaction direction="left-to-right" evidence="1">
        <dbReference type="Rhea" id="RHEA:40428"/>
    </physiologicalReaction>
</comment>
<comment type="catalytic activity">
    <reaction evidence="1">
        <text>a 1-O-alkyl-2-acetyl-sn-glycero-3-phosphocholine + 1-hexadecanoyl-sn-glycero-3-phosphocholine = 1-hexadecanoyl-2-acetyl-sn-glycero-3-phosphocholine + a 1-O-alkyl-sn-glycero-3-phosphocholine</text>
        <dbReference type="Rhea" id="RHEA:53636"/>
        <dbReference type="ChEBI" id="CHEBI:30909"/>
        <dbReference type="ChEBI" id="CHEBI:36707"/>
        <dbReference type="ChEBI" id="CHEBI:72998"/>
        <dbReference type="ChEBI" id="CHEBI:75219"/>
    </reaction>
    <physiologicalReaction direction="left-to-right" evidence="1">
        <dbReference type="Rhea" id="RHEA:53637"/>
    </physiologicalReaction>
</comment>
<comment type="activity regulation">
    <text evidence="7 9">APOA1 is the most potent activator in plasma. Also activated by APOE, APOC1 and APOA4.</text>
</comment>
<comment type="subcellular location">
    <subcellularLocation>
        <location evidence="9 11">Secreted</location>
    </subcellularLocation>
    <text evidence="1 11">Secreted into blood plasma (PubMed:8820107). Produced in astrocytes and secreted into cerebral spinal fluid (CSF) (By similarity).</text>
</comment>
<comment type="tissue specificity">
    <text evidence="9 10">Detected in blood plasma (PubMed:8820107). Produced and secreted by astrocytes (at protein level) (PubMed:19065001). Abundantly expressed in liver, brain and testis with highest levels in liver. In the brain, found in cerebellum, cerebral cortex, hippocampus and brain stem. Located to neurons and neuroglia.</text>
</comment>
<comment type="developmental stage">
    <text evidence="10">In the testis, expressed days 4,8, 14, and 35 of postnatal life with highest levels at day 35. In the brain, expressed in fetal stages and levels begin to rise after day 4 after birth and continue to increase through suckling and weaning reaching a peak at postnatal day 24. In the liver, expressed in fetal life from day 16-21 of gestation with a 3-fold increase in the four final days of gestation.</text>
</comment>
<comment type="disruption phenotype">
    <text evidence="4 5 6">Null mice exhibit a 7-fold increase in the cholesteryl ester fatty acid CEFA ratio of APOB lipoprotein CEs. There is also a 3.6 increase in vascular ring O(2) production and plasma phospholipid (PL)-bound-F2-isoprostane levels. This effect is paradoxically reversed in the APOE knockout background (PubMed:11809774, PubMed:11893779). Mice show a significant reduction in total cholesterol, HDL-cholesterol, apoA-I, serum paraoxonase and PAF acetylhydrolase enzyme activities and show a modest (36%) but significant increase in apoJ levels (PubMed:10393212).</text>
</comment>
<comment type="similarity">
    <text evidence="13">Belongs to the AB hydrolase superfamily. Lipase family.</text>
</comment>